<organism>
    <name type="scientific">Escherichia coli (strain K12 / MC4100 / BW2952)</name>
    <dbReference type="NCBI Taxonomy" id="595496"/>
    <lineage>
        <taxon>Bacteria</taxon>
        <taxon>Pseudomonadati</taxon>
        <taxon>Pseudomonadota</taxon>
        <taxon>Gammaproteobacteria</taxon>
        <taxon>Enterobacterales</taxon>
        <taxon>Enterobacteriaceae</taxon>
        <taxon>Escherichia</taxon>
    </lineage>
</organism>
<feature type="chain" id="PRO_1000215802" description="4-hydroxybenzoate octaprenyltransferase">
    <location>
        <begin position="1"/>
        <end position="290"/>
    </location>
</feature>
<feature type="transmembrane region" description="Helical" evidence="1">
    <location>
        <begin position="23"/>
        <end position="43"/>
    </location>
</feature>
<feature type="transmembrane region" description="Helical" evidence="1">
    <location>
        <begin position="46"/>
        <end position="66"/>
    </location>
</feature>
<feature type="transmembrane region" description="Helical" evidence="1">
    <location>
        <begin position="99"/>
        <end position="119"/>
    </location>
</feature>
<feature type="transmembrane region" description="Helical" evidence="1">
    <location>
        <begin position="141"/>
        <end position="161"/>
    </location>
</feature>
<feature type="transmembrane region" description="Helical" evidence="1">
    <location>
        <begin position="163"/>
        <end position="183"/>
    </location>
</feature>
<feature type="transmembrane region" description="Helical" evidence="1">
    <location>
        <begin position="213"/>
        <end position="233"/>
    </location>
</feature>
<feature type="transmembrane region" description="Helical" evidence="1">
    <location>
        <begin position="234"/>
        <end position="254"/>
    </location>
</feature>
<feature type="transmembrane region" description="Helical" evidence="1">
    <location>
        <begin position="268"/>
        <end position="288"/>
    </location>
</feature>
<proteinExistence type="inferred from homology"/>
<gene>
    <name evidence="1" type="primary">ubiA</name>
    <name type="ordered locus">BWG_3753</name>
</gene>
<protein>
    <recommendedName>
        <fullName evidence="1">4-hydroxybenzoate octaprenyltransferase</fullName>
        <ecNumber evidence="1">2.5.1.39</ecNumber>
    </recommendedName>
    <alternativeName>
        <fullName evidence="1">4-HB polyprenyltransferase</fullName>
    </alternativeName>
</protein>
<sequence>MEWSLTQNKLLAFHRLMRTDKPIGALLLLWPTLWALWVATPGVPQLWILAVFVAGVWLMRAAGCVVNDYADRKFDGHVKRTANRPLPSGAVTEKEARALFVVLVLISFLLVLTLNTMTILLSIAALALAWVYPFMKRYTHLPQVVLGAAFGWSIPMAFAAVSESVPLSCWLMFLANILWAVAYDTQYAMVDRDDDVKIGIKSTAILFGQYDKLIIGILQIGVLALMAIIGELNGLGWGYYWSILVAGALFVYQQKLIANREREACFKAFMNNNYVGLVLFLGLAMSYWHF</sequence>
<dbReference type="EC" id="2.5.1.39" evidence="1"/>
<dbReference type="EMBL" id="CP001396">
    <property type="protein sequence ID" value="ACR64065.1"/>
    <property type="molecule type" value="Genomic_DNA"/>
</dbReference>
<dbReference type="RefSeq" id="WP_000455227.1">
    <property type="nucleotide sequence ID" value="NC_012759.1"/>
</dbReference>
<dbReference type="SMR" id="C5A133"/>
<dbReference type="GeneID" id="93777791"/>
<dbReference type="KEGG" id="ebw:BWG_3753"/>
<dbReference type="HOGENOM" id="CLU_034879_1_0_6"/>
<dbReference type="UniPathway" id="UPA00232"/>
<dbReference type="GO" id="GO:0005886">
    <property type="term" value="C:plasma membrane"/>
    <property type="evidence" value="ECO:0007669"/>
    <property type="project" value="UniProtKB-SubCell"/>
</dbReference>
<dbReference type="GO" id="GO:0008412">
    <property type="term" value="F:4-hydroxybenzoate polyprenyltransferase activity"/>
    <property type="evidence" value="ECO:0007669"/>
    <property type="project" value="UniProtKB-UniRule"/>
</dbReference>
<dbReference type="GO" id="GO:0006744">
    <property type="term" value="P:ubiquinone biosynthetic process"/>
    <property type="evidence" value="ECO:0007669"/>
    <property type="project" value="UniProtKB-UniRule"/>
</dbReference>
<dbReference type="CDD" id="cd13959">
    <property type="entry name" value="PT_UbiA_COQ2"/>
    <property type="match status" value="1"/>
</dbReference>
<dbReference type="FunFam" id="1.10.357.140:FF:000002">
    <property type="entry name" value="4-hydroxybenzoate octaprenyltransferase"/>
    <property type="match status" value="1"/>
</dbReference>
<dbReference type="FunFam" id="1.20.120.1780:FF:000001">
    <property type="entry name" value="4-hydroxybenzoate octaprenyltransferase"/>
    <property type="match status" value="1"/>
</dbReference>
<dbReference type="Gene3D" id="1.10.357.140">
    <property type="entry name" value="UbiA prenyltransferase"/>
    <property type="match status" value="1"/>
</dbReference>
<dbReference type="Gene3D" id="1.20.120.1780">
    <property type="entry name" value="UbiA prenyltransferase"/>
    <property type="match status" value="1"/>
</dbReference>
<dbReference type="HAMAP" id="MF_01635">
    <property type="entry name" value="UbiA"/>
    <property type="match status" value="1"/>
</dbReference>
<dbReference type="InterPro" id="IPR006370">
    <property type="entry name" value="HB_polyprenyltransferase-like"/>
</dbReference>
<dbReference type="InterPro" id="IPR039653">
    <property type="entry name" value="Prenyltransferase"/>
</dbReference>
<dbReference type="InterPro" id="IPR000537">
    <property type="entry name" value="UbiA_prenyltransferase"/>
</dbReference>
<dbReference type="InterPro" id="IPR030470">
    <property type="entry name" value="UbiA_prenylTrfase_CS"/>
</dbReference>
<dbReference type="InterPro" id="IPR044878">
    <property type="entry name" value="UbiA_sf"/>
</dbReference>
<dbReference type="NCBIfam" id="TIGR01474">
    <property type="entry name" value="ubiA_proteo"/>
    <property type="match status" value="1"/>
</dbReference>
<dbReference type="PANTHER" id="PTHR11048:SF28">
    <property type="entry name" value="4-HYDROXYBENZOATE POLYPRENYLTRANSFERASE, MITOCHONDRIAL"/>
    <property type="match status" value="1"/>
</dbReference>
<dbReference type="PANTHER" id="PTHR11048">
    <property type="entry name" value="PRENYLTRANSFERASES"/>
    <property type="match status" value="1"/>
</dbReference>
<dbReference type="Pfam" id="PF01040">
    <property type="entry name" value="UbiA"/>
    <property type="match status" value="1"/>
</dbReference>
<dbReference type="PROSITE" id="PS00943">
    <property type="entry name" value="UBIA"/>
    <property type="match status" value="1"/>
</dbReference>
<reference key="1">
    <citation type="journal article" date="2009" name="J. Bacteriol.">
        <title>Genomic sequencing reveals regulatory mutations and recombinational events in the widely used MC4100 lineage of Escherichia coli K-12.</title>
        <authorList>
            <person name="Ferenci T."/>
            <person name="Zhou Z."/>
            <person name="Betteridge T."/>
            <person name="Ren Y."/>
            <person name="Liu Y."/>
            <person name="Feng L."/>
            <person name="Reeves P.R."/>
            <person name="Wang L."/>
        </authorList>
    </citation>
    <scope>NUCLEOTIDE SEQUENCE [LARGE SCALE GENOMIC DNA]</scope>
    <source>
        <strain>K12 / MC4100 / BW2952</strain>
    </source>
</reference>
<evidence type="ECO:0000255" key="1">
    <source>
        <dbReference type="HAMAP-Rule" id="MF_01635"/>
    </source>
</evidence>
<accession>C5A133</accession>
<keyword id="KW-0997">Cell inner membrane</keyword>
<keyword id="KW-1003">Cell membrane</keyword>
<keyword id="KW-0460">Magnesium</keyword>
<keyword id="KW-0472">Membrane</keyword>
<keyword id="KW-0808">Transferase</keyword>
<keyword id="KW-0812">Transmembrane</keyword>
<keyword id="KW-1133">Transmembrane helix</keyword>
<keyword id="KW-0831">Ubiquinone biosynthesis</keyword>
<comment type="function">
    <text evidence="1">Catalyzes the prenylation of para-hydroxybenzoate (PHB) with an all-trans polyprenyl group. Mediates the second step in the final reaction sequence of ubiquinone-8 (UQ-8) biosynthesis, which is the condensation of the polyisoprenoid side chain with PHB, generating the first membrane-bound Q intermediate 3-octaprenyl-4-hydroxybenzoate.</text>
</comment>
<comment type="catalytic activity">
    <reaction evidence="1">
        <text>all-trans-octaprenyl diphosphate + 4-hydroxybenzoate = 4-hydroxy-3-(all-trans-octaprenyl)benzoate + diphosphate</text>
        <dbReference type="Rhea" id="RHEA:27782"/>
        <dbReference type="ChEBI" id="CHEBI:1617"/>
        <dbReference type="ChEBI" id="CHEBI:17879"/>
        <dbReference type="ChEBI" id="CHEBI:33019"/>
        <dbReference type="ChEBI" id="CHEBI:57711"/>
        <dbReference type="EC" id="2.5.1.39"/>
    </reaction>
</comment>
<comment type="cofactor">
    <cofactor evidence="1">
        <name>Mg(2+)</name>
        <dbReference type="ChEBI" id="CHEBI:18420"/>
    </cofactor>
</comment>
<comment type="pathway">
    <text evidence="1">Cofactor biosynthesis; ubiquinone biosynthesis.</text>
</comment>
<comment type="subcellular location">
    <subcellularLocation>
        <location evidence="1">Cell inner membrane</location>
        <topology evidence="1">Multi-pass membrane protein</topology>
    </subcellularLocation>
</comment>
<comment type="similarity">
    <text evidence="1">Belongs to the UbiA prenyltransferase family.</text>
</comment>
<name>UBIA_ECOBW</name>